<protein>
    <recommendedName>
        <fullName evidence="1">2-isopropylmalate synthase</fullName>
        <ecNumber evidence="1">2.3.3.13</ecNumber>
    </recommendedName>
    <alternativeName>
        <fullName evidence="1">Alpha-IPM synthase</fullName>
    </alternativeName>
    <alternativeName>
        <fullName evidence="1">Alpha-isopropylmalate synthase</fullName>
    </alternativeName>
</protein>
<feature type="chain" id="PRO_1000149247" description="2-isopropylmalate synthase">
    <location>
        <begin position="1"/>
        <end position="519"/>
    </location>
</feature>
<feature type="domain" description="Pyruvate carboxyltransferase" evidence="1">
    <location>
        <begin position="5"/>
        <end position="267"/>
    </location>
</feature>
<feature type="region of interest" description="Regulatory domain" evidence="1">
    <location>
        <begin position="392"/>
        <end position="519"/>
    </location>
</feature>
<feature type="binding site" evidence="1">
    <location>
        <position position="14"/>
    </location>
    <ligand>
        <name>Mn(2+)</name>
        <dbReference type="ChEBI" id="CHEBI:29035"/>
    </ligand>
</feature>
<feature type="binding site" evidence="1">
    <location>
        <position position="202"/>
    </location>
    <ligand>
        <name>Mn(2+)</name>
        <dbReference type="ChEBI" id="CHEBI:29035"/>
    </ligand>
</feature>
<feature type="binding site" evidence="1">
    <location>
        <position position="204"/>
    </location>
    <ligand>
        <name>Mn(2+)</name>
        <dbReference type="ChEBI" id="CHEBI:29035"/>
    </ligand>
</feature>
<feature type="binding site" evidence="1">
    <location>
        <position position="238"/>
    </location>
    <ligand>
        <name>Mn(2+)</name>
        <dbReference type="ChEBI" id="CHEBI:29035"/>
    </ligand>
</feature>
<name>LEU1_PROMH</name>
<organism>
    <name type="scientific">Proteus mirabilis (strain HI4320)</name>
    <dbReference type="NCBI Taxonomy" id="529507"/>
    <lineage>
        <taxon>Bacteria</taxon>
        <taxon>Pseudomonadati</taxon>
        <taxon>Pseudomonadota</taxon>
        <taxon>Gammaproteobacteria</taxon>
        <taxon>Enterobacterales</taxon>
        <taxon>Morganellaceae</taxon>
        <taxon>Proteus</taxon>
    </lineage>
</organism>
<evidence type="ECO:0000255" key="1">
    <source>
        <dbReference type="HAMAP-Rule" id="MF_01025"/>
    </source>
</evidence>
<dbReference type="EC" id="2.3.3.13" evidence="1"/>
<dbReference type="EMBL" id="AM942759">
    <property type="protein sequence ID" value="CAR44166.1"/>
    <property type="molecule type" value="Genomic_DNA"/>
</dbReference>
<dbReference type="RefSeq" id="WP_004244137.1">
    <property type="nucleotide sequence ID" value="NC_010554.1"/>
</dbReference>
<dbReference type="SMR" id="B4F194"/>
<dbReference type="EnsemblBacteria" id="CAR44166">
    <property type="protein sequence ID" value="CAR44166"/>
    <property type="gene ID" value="PMI2084"/>
</dbReference>
<dbReference type="GeneID" id="6802630"/>
<dbReference type="KEGG" id="pmr:PMI2084"/>
<dbReference type="eggNOG" id="COG0119">
    <property type="taxonomic scope" value="Bacteria"/>
</dbReference>
<dbReference type="HOGENOM" id="CLU_022158_0_1_6"/>
<dbReference type="UniPathway" id="UPA00048">
    <property type="reaction ID" value="UER00070"/>
</dbReference>
<dbReference type="Proteomes" id="UP000008319">
    <property type="component" value="Chromosome"/>
</dbReference>
<dbReference type="GO" id="GO:0005829">
    <property type="term" value="C:cytosol"/>
    <property type="evidence" value="ECO:0007669"/>
    <property type="project" value="TreeGrafter"/>
</dbReference>
<dbReference type="GO" id="GO:0003852">
    <property type="term" value="F:2-isopropylmalate synthase activity"/>
    <property type="evidence" value="ECO:0007669"/>
    <property type="project" value="UniProtKB-UniRule"/>
</dbReference>
<dbReference type="GO" id="GO:0003985">
    <property type="term" value="F:acetyl-CoA C-acetyltransferase activity"/>
    <property type="evidence" value="ECO:0007669"/>
    <property type="project" value="UniProtKB-UniRule"/>
</dbReference>
<dbReference type="GO" id="GO:0030145">
    <property type="term" value="F:manganese ion binding"/>
    <property type="evidence" value="ECO:0007669"/>
    <property type="project" value="UniProtKB-UniRule"/>
</dbReference>
<dbReference type="GO" id="GO:0009098">
    <property type="term" value="P:L-leucine biosynthetic process"/>
    <property type="evidence" value="ECO:0007669"/>
    <property type="project" value="UniProtKB-UniRule"/>
</dbReference>
<dbReference type="CDD" id="cd07940">
    <property type="entry name" value="DRE_TIM_IPMS"/>
    <property type="match status" value="1"/>
</dbReference>
<dbReference type="FunFam" id="1.10.238.260:FF:000001">
    <property type="entry name" value="2-isopropylmalate synthase"/>
    <property type="match status" value="1"/>
</dbReference>
<dbReference type="FunFam" id="3.20.20.70:FF:000010">
    <property type="entry name" value="2-isopropylmalate synthase"/>
    <property type="match status" value="1"/>
</dbReference>
<dbReference type="FunFam" id="3.30.160.270:FF:000001">
    <property type="entry name" value="2-isopropylmalate synthase"/>
    <property type="match status" value="1"/>
</dbReference>
<dbReference type="Gene3D" id="1.10.238.260">
    <property type="match status" value="1"/>
</dbReference>
<dbReference type="Gene3D" id="3.30.160.270">
    <property type="match status" value="1"/>
</dbReference>
<dbReference type="Gene3D" id="3.20.20.70">
    <property type="entry name" value="Aldolase class I"/>
    <property type="match status" value="1"/>
</dbReference>
<dbReference type="HAMAP" id="MF_01025">
    <property type="entry name" value="LeuA_type1"/>
    <property type="match status" value="1"/>
</dbReference>
<dbReference type="InterPro" id="IPR050073">
    <property type="entry name" value="2-IPM_HCS-like"/>
</dbReference>
<dbReference type="InterPro" id="IPR013709">
    <property type="entry name" value="2-isopropylmalate_synth_dimer"/>
</dbReference>
<dbReference type="InterPro" id="IPR002034">
    <property type="entry name" value="AIPM/Hcit_synth_CS"/>
</dbReference>
<dbReference type="InterPro" id="IPR013785">
    <property type="entry name" value="Aldolase_TIM"/>
</dbReference>
<dbReference type="InterPro" id="IPR054691">
    <property type="entry name" value="LeuA/HCS_post-cat"/>
</dbReference>
<dbReference type="InterPro" id="IPR036230">
    <property type="entry name" value="LeuA_allosteric_dom_sf"/>
</dbReference>
<dbReference type="InterPro" id="IPR005671">
    <property type="entry name" value="LeuA_bact_synth"/>
</dbReference>
<dbReference type="InterPro" id="IPR000891">
    <property type="entry name" value="PYR_CT"/>
</dbReference>
<dbReference type="NCBIfam" id="TIGR00973">
    <property type="entry name" value="leuA_bact"/>
    <property type="match status" value="1"/>
</dbReference>
<dbReference type="NCBIfam" id="NF002084">
    <property type="entry name" value="PRK00915.1-1"/>
    <property type="match status" value="1"/>
</dbReference>
<dbReference type="NCBIfam" id="NF002086">
    <property type="entry name" value="PRK00915.1-3"/>
    <property type="match status" value="1"/>
</dbReference>
<dbReference type="PANTHER" id="PTHR10277:SF9">
    <property type="entry name" value="2-ISOPROPYLMALATE SYNTHASE 1, CHLOROPLASTIC-RELATED"/>
    <property type="match status" value="1"/>
</dbReference>
<dbReference type="PANTHER" id="PTHR10277">
    <property type="entry name" value="HOMOCITRATE SYNTHASE-RELATED"/>
    <property type="match status" value="1"/>
</dbReference>
<dbReference type="Pfam" id="PF22617">
    <property type="entry name" value="HCS_D2"/>
    <property type="match status" value="1"/>
</dbReference>
<dbReference type="Pfam" id="PF00682">
    <property type="entry name" value="HMGL-like"/>
    <property type="match status" value="1"/>
</dbReference>
<dbReference type="Pfam" id="PF08502">
    <property type="entry name" value="LeuA_dimer"/>
    <property type="match status" value="1"/>
</dbReference>
<dbReference type="SMART" id="SM00917">
    <property type="entry name" value="LeuA_dimer"/>
    <property type="match status" value="1"/>
</dbReference>
<dbReference type="SUPFAM" id="SSF110921">
    <property type="entry name" value="2-isopropylmalate synthase LeuA, allosteric (dimerisation) domain"/>
    <property type="match status" value="1"/>
</dbReference>
<dbReference type="SUPFAM" id="SSF51569">
    <property type="entry name" value="Aldolase"/>
    <property type="match status" value="1"/>
</dbReference>
<dbReference type="PROSITE" id="PS00815">
    <property type="entry name" value="AIPM_HOMOCIT_SYNTH_1"/>
    <property type="match status" value="1"/>
</dbReference>
<dbReference type="PROSITE" id="PS00816">
    <property type="entry name" value="AIPM_HOMOCIT_SYNTH_2"/>
    <property type="match status" value="1"/>
</dbReference>
<dbReference type="PROSITE" id="PS50991">
    <property type="entry name" value="PYR_CT"/>
    <property type="match status" value="1"/>
</dbReference>
<proteinExistence type="inferred from homology"/>
<sequence>MSNNVIIFDTTLRDGEQALQASLSVKEKLQIAYALERLGVDIIEAGFPVSSPGDFESVQTIAREIKNSRICALARCVDNDIDVAAESLNIAEAFRIHVFLATSALHAEHKLKKSFDDIIEMGTRSIKRARRYTDDVEFSCEDAGRTHIDNLCRIVESAINAGATTINIPDTVGYTTPYQFGGIITNLFERVPNIDKAVISVHCHDDLGMAVANSITAVQAGARQVEGTINGLGERAGNCALEEVIMAIKVREQMMNVQTRINHKEIYRTSQLVSQLCNTPIHANKSIVGSNAFAHSSGIHQDGVLKNRETYEIMTPESIGLKEVQLNLTSRSGRAAVKHRMEEMGYRETDYNLDSLYAAFLRLADKKGQVFDYDLEALAFMGQQQQEPDEFVMNYFNTQSGSSTVATASVSISRKNEEITEAATGNGPVDAVYQAISRATGYPLKLVTYQLTAKGEGRDALGQVDIVVEYQGRKFHGMGLETDIVGSSANAMMHVINSIWRSEQVEIEKRKHHTTQEAV</sequence>
<reference key="1">
    <citation type="journal article" date="2008" name="J. Bacteriol.">
        <title>Complete genome sequence of uropathogenic Proteus mirabilis, a master of both adherence and motility.</title>
        <authorList>
            <person name="Pearson M.M."/>
            <person name="Sebaihia M."/>
            <person name="Churcher C."/>
            <person name="Quail M.A."/>
            <person name="Seshasayee A.S."/>
            <person name="Luscombe N.M."/>
            <person name="Abdellah Z."/>
            <person name="Arrosmith C."/>
            <person name="Atkin B."/>
            <person name="Chillingworth T."/>
            <person name="Hauser H."/>
            <person name="Jagels K."/>
            <person name="Moule S."/>
            <person name="Mungall K."/>
            <person name="Norbertczak H."/>
            <person name="Rabbinowitsch E."/>
            <person name="Walker D."/>
            <person name="Whithead S."/>
            <person name="Thomson N.R."/>
            <person name="Rather P.N."/>
            <person name="Parkhill J."/>
            <person name="Mobley H.L.T."/>
        </authorList>
    </citation>
    <scope>NUCLEOTIDE SEQUENCE [LARGE SCALE GENOMIC DNA]</scope>
    <source>
        <strain>HI4320</strain>
    </source>
</reference>
<accession>B4F194</accession>
<keyword id="KW-0028">Amino-acid biosynthesis</keyword>
<keyword id="KW-0100">Branched-chain amino acid biosynthesis</keyword>
<keyword id="KW-0963">Cytoplasm</keyword>
<keyword id="KW-0432">Leucine biosynthesis</keyword>
<keyword id="KW-0464">Manganese</keyword>
<keyword id="KW-0479">Metal-binding</keyword>
<keyword id="KW-1185">Reference proteome</keyword>
<keyword id="KW-0808">Transferase</keyword>
<gene>
    <name evidence="1" type="primary">leuA</name>
    <name type="ordered locus">PMI2084</name>
</gene>
<comment type="function">
    <text evidence="1">Catalyzes the condensation of the acetyl group of acetyl-CoA with 3-methyl-2-oxobutanoate (2-ketoisovalerate) to form 3-carboxy-3-hydroxy-4-methylpentanoate (2-isopropylmalate).</text>
</comment>
<comment type="catalytic activity">
    <reaction evidence="1">
        <text>3-methyl-2-oxobutanoate + acetyl-CoA + H2O = (2S)-2-isopropylmalate + CoA + H(+)</text>
        <dbReference type="Rhea" id="RHEA:21524"/>
        <dbReference type="ChEBI" id="CHEBI:1178"/>
        <dbReference type="ChEBI" id="CHEBI:11851"/>
        <dbReference type="ChEBI" id="CHEBI:15377"/>
        <dbReference type="ChEBI" id="CHEBI:15378"/>
        <dbReference type="ChEBI" id="CHEBI:57287"/>
        <dbReference type="ChEBI" id="CHEBI:57288"/>
        <dbReference type="EC" id="2.3.3.13"/>
    </reaction>
</comment>
<comment type="cofactor">
    <cofactor evidence="1">
        <name>Mn(2+)</name>
        <dbReference type="ChEBI" id="CHEBI:29035"/>
    </cofactor>
</comment>
<comment type="pathway">
    <text evidence="1">Amino-acid biosynthesis; L-leucine biosynthesis; L-leucine from 3-methyl-2-oxobutanoate: step 1/4.</text>
</comment>
<comment type="subunit">
    <text evidence="1">Homodimer.</text>
</comment>
<comment type="subcellular location">
    <subcellularLocation>
        <location evidence="1">Cytoplasm</location>
    </subcellularLocation>
</comment>
<comment type="similarity">
    <text evidence="1">Belongs to the alpha-IPM synthase/homocitrate synthase family. LeuA type 1 subfamily.</text>
</comment>